<dbReference type="EMBL" id="BC112447">
    <property type="protein sequence ID" value="AAI12448.1"/>
    <property type="molecule type" value="mRNA"/>
</dbReference>
<dbReference type="RefSeq" id="NP_001040069.1">
    <property type="nucleotide sequence ID" value="NM_001046604.1"/>
</dbReference>
<dbReference type="SMR" id="Q2KIZ9"/>
<dbReference type="FunCoup" id="Q2KIZ9">
    <property type="interactions" value="1915"/>
</dbReference>
<dbReference type="STRING" id="9913.ENSBTAP00000017326"/>
<dbReference type="PaxDb" id="9913-ENSBTAP00000017326"/>
<dbReference type="GeneID" id="617512"/>
<dbReference type="KEGG" id="bta:617512"/>
<dbReference type="CTD" id="23582"/>
<dbReference type="eggNOG" id="ENOG502SGCW">
    <property type="taxonomic scope" value="Eukaryota"/>
</dbReference>
<dbReference type="InParanoid" id="Q2KIZ9"/>
<dbReference type="OrthoDB" id="41588at2759"/>
<dbReference type="Proteomes" id="UP000009136">
    <property type="component" value="Unplaced"/>
</dbReference>
<dbReference type="GO" id="GO:0005737">
    <property type="term" value="C:cytoplasm"/>
    <property type="evidence" value="ECO:0007669"/>
    <property type="project" value="UniProtKB-SubCell"/>
</dbReference>
<dbReference type="GO" id="GO:0005634">
    <property type="term" value="C:nucleus"/>
    <property type="evidence" value="ECO:0000318"/>
    <property type="project" value="GO_Central"/>
</dbReference>
<dbReference type="FunFam" id="1.20.1410.10:FF:000005">
    <property type="entry name" value="cyclin-D1-binding protein 1"/>
    <property type="match status" value="1"/>
</dbReference>
<dbReference type="FunFam" id="1.20.1420.10:FF:000008">
    <property type="entry name" value="Cyclin-D1-binding protein 1 homolog"/>
    <property type="match status" value="1"/>
</dbReference>
<dbReference type="Gene3D" id="1.20.1410.10">
    <property type="entry name" value="I/LWEQ domain"/>
    <property type="match status" value="1"/>
</dbReference>
<dbReference type="Gene3D" id="1.20.1420.10">
    <property type="entry name" value="Talin, central domain"/>
    <property type="match status" value="1"/>
</dbReference>
<dbReference type="InterPro" id="IPR026907">
    <property type="entry name" value="GCIP-like"/>
</dbReference>
<dbReference type="InterPro" id="IPR049317">
    <property type="entry name" value="GCIP-like_N"/>
</dbReference>
<dbReference type="InterPro" id="IPR049318">
    <property type="entry name" value="GCIP_C"/>
</dbReference>
<dbReference type="PANTHER" id="PTHR15492">
    <property type="entry name" value="CYCLIN D1-BINDING PROTEIN 1"/>
    <property type="match status" value="1"/>
</dbReference>
<dbReference type="PANTHER" id="PTHR15492:SF1">
    <property type="entry name" value="CYCLIN-D1-BINDING PROTEIN 1"/>
    <property type="match status" value="1"/>
</dbReference>
<dbReference type="Pfam" id="PF20936">
    <property type="entry name" value="GCIP_C"/>
    <property type="match status" value="1"/>
</dbReference>
<dbReference type="Pfam" id="PF13324">
    <property type="entry name" value="GCIP_N"/>
    <property type="match status" value="1"/>
</dbReference>
<protein>
    <recommendedName>
        <fullName>Cyclin-D1-binding protein 1</fullName>
    </recommendedName>
</protein>
<keyword id="KW-0131">Cell cycle</keyword>
<keyword id="KW-0963">Cytoplasm</keyword>
<keyword id="KW-0539">Nucleus</keyword>
<keyword id="KW-0597">Phosphoprotein</keyword>
<keyword id="KW-1185">Reference proteome</keyword>
<comment type="function">
    <text evidence="1">May negatively regulate cell cycle progression. May act at least in part via inhibition of the cyclin-D1/CDK4 complex, thereby preventing phosphorylation of RB1 and blocking E2F-dependent transcription (By similarity).</text>
</comment>
<comment type="subunit">
    <text evidence="1">Interacts with CCND1 and GRAP2. May also interact with COPS5, RPLP0, SIRT6, SYF2 and TCF3.</text>
</comment>
<comment type="subcellular location">
    <subcellularLocation>
        <location evidence="1">Cytoplasm</location>
    </subcellularLocation>
    <subcellularLocation>
        <location evidence="1">Nucleus</location>
    </subcellularLocation>
</comment>
<comment type="PTM">
    <text evidence="1">Phosphorylated.</text>
</comment>
<comment type="similarity">
    <text evidence="2">Belongs to the CCNDBP1 family.</text>
</comment>
<proteinExistence type="evidence at transcript level"/>
<feature type="chain" id="PRO_0000323371" description="Cyclin-D1-binding protein 1">
    <location>
        <begin position="1"/>
        <end position="358"/>
    </location>
</feature>
<feature type="region of interest" description="Required for interaction with CCND1" evidence="1">
    <location>
        <begin position="1"/>
        <end position="207"/>
    </location>
</feature>
<feature type="region of interest" description="Interaction with RPLP0" evidence="1">
    <location>
        <begin position="1"/>
        <end position="189"/>
    </location>
</feature>
<feature type="region of interest" description="Interaction with TCF3" evidence="1">
    <location>
        <begin position="1"/>
        <end position="183"/>
    </location>
</feature>
<feature type="region of interest" description="Interaction with TCF3" evidence="1">
    <location>
        <begin position="149"/>
        <end position="358"/>
    </location>
</feature>
<feature type="region of interest" description="Interaction with RPLP0" evidence="1">
    <location>
        <begin position="238"/>
        <end position="358"/>
    </location>
</feature>
<reference key="1">
    <citation type="submission" date="2006-01" db="EMBL/GenBank/DDBJ databases">
        <authorList>
            <consortium name="NIH - Mammalian Gene Collection (MGC) project"/>
        </authorList>
    </citation>
    <scope>NUCLEOTIDE SEQUENCE [LARGE SCALE MRNA]</scope>
    <source>
        <strain>Crossbred X Angus</strain>
        <tissue>Liver</tissue>
    </source>
</reference>
<accession>Q2KIZ9</accession>
<organism>
    <name type="scientific">Bos taurus</name>
    <name type="common">Bovine</name>
    <dbReference type="NCBI Taxonomy" id="9913"/>
    <lineage>
        <taxon>Eukaryota</taxon>
        <taxon>Metazoa</taxon>
        <taxon>Chordata</taxon>
        <taxon>Craniata</taxon>
        <taxon>Vertebrata</taxon>
        <taxon>Euteleostomi</taxon>
        <taxon>Mammalia</taxon>
        <taxon>Eutheria</taxon>
        <taxon>Laurasiatheria</taxon>
        <taxon>Artiodactyla</taxon>
        <taxon>Ruminantia</taxon>
        <taxon>Pecora</taxon>
        <taxon>Bovidae</taxon>
        <taxon>Bovinae</taxon>
        <taxon>Bos</taxon>
    </lineage>
</organism>
<evidence type="ECO:0000250" key="1"/>
<evidence type="ECO:0000305" key="2"/>
<sequence>MESAAVSAAPDATLDPPLEQLRHLAGELRQLLPGVRVGEAQETTKEFDREAFWRRFNEAAVTVSREATTLTVAFSRLPLPSPQETQRFCEQVHAAIKAIIGVYYLFPKDQGITLRKLVRSATLDIVDDMAQLVEALYINPAQSSPENLISYNSVWDACQHVPQIPKDNKAAALSVLTKSVDLVKDAHEEMEQAVEECDPYCGLLNDIEEDSSDNHVDEDILGCPNNRDSYWSEEDQELIIPCLALARASKACLKKIRLSVAENGKKDQVAQLDDIVDISDEISPSVDDLALSIYPPVCPLTVRINSAKLASVLKKALEITKASHVTPQPEDSWIPLLINAVDHCMNRIKELTQNEVES</sequence>
<name>CCDB1_BOVIN</name>
<gene>
    <name type="primary">CCNDBP1</name>
</gene>